<dbReference type="EMBL" id="CP000886">
    <property type="protein sequence ID" value="ABX66812.1"/>
    <property type="molecule type" value="Genomic_DNA"/>
</dbReference>
<dbReference type="KEGG" id="spq:SPAB_01405"/>
<dbReference type="PATRIC" id="fig|1016998.12.peg.1324"/>
<dbReference type="HOGENOM" id="CLU_109769_0_1_6"/>
<dbReference type="BioCyc" id="SENT1016998:SPAB_RS05755-MONOMER"/>
<dbReference type="Proteomes" id="UP000008556">
    <property type="component" value="Chromosome"/>
</dbReference>
<dbReference type="HAMAP" id="MF_00676">
    <property type="entry name" value="UPF0260"/>
    <property type="match status" value="1"/>
</dbReference>
<dbReference type="InterPro" id="IPR005358">
    <property type="entry name" value="Puta_zinc/iron-chelating_dom"/>
</dbReference>
<dbReference type="InterPro" id="IPR008228">
    <property type="entry name" value="UCP006173"/>
</dbReference>
<dbReference type="NCBIfam" id="NF003498">
    <property type="entry name" value="PRK05170.1-1"/>
    <property type="match status" value="1"/>
</dbReference>
<dbReference type="NCBIfam" id="NF003501">
    <property type="entry name" value="PRK05170.1-5"/>
    <property type="match status" value="1"/>
</dbReference>
<dbReference type="NCBIfam" id="NF003503">
    <property type="entry name" value="PRK05170.2-1"/>
    <property type="match status" value="1"/>
</dbReference>
<dbReference type="NCBIfam" id="NF003507">
    <property type="entry name" value="PRK05170.2-5"/>
    <property type="match status" value="1"/>
</dbReference>
<dbReference type="PANTHER" id="PTHR37421">
    <property type="entry name" value="UPF0260 PROTEIN YCGN"/>
    <property type="match status" value="1"/>
</dbReference>
<dbReference type="PANTHER" id="PTHR37421:SF1">
    <property type="entry name" value="UPF0260 PROTEIN YCGN"/>
    <property type="match status" value="1"/>
</dbReference>
<dbReference type="Pfam" id="PF03692">
    <property type="entry name" value="CxxCxxCC"/>
    <property type="match status" value="1"/>
</dbReference>
<dbReference type="PIRSF" id="PIRSF006173">
    <property type="entry name" value="UCP006173"/>
    <property type="match status" value="1"/>
</dbReference>
<feature type="chain" id="PRO_1000082973" description="UPF0260 protein YcgN">
    <location>
        <begin position="1"/>
        <end position="153"/>
    </location>
</feature>
<gene>
    <name evidence="1" type="primary">ycgN</name>
    <name type="ordered locus">SPAB_01405</name>
</gene>
<proteinExistence type="inferred from homology"/>
<protein>
    <recommendedName>
        <fullName evidence="1">UPF0260 protein YcgN</fullName>
    </recommendedName>
</protein>
<comment type="similarity">
    <text evidence="1">Belongs to the UPF0260 family.</text>
</comment>
<reference key="1">
    <citation type="submission" date="2007-11" db="EMBL/GenBank/DDBJ databases">
        <authorList>
            <consortium name="The Salmonella enterica serovar Paratyphi B Genome Sequencing Project"/>
            <person name="McClelland M."/>
            <person name="Sanderson E.K."/>
            <person name="Porwollik S."/>
            <person name="Spieth J."/>
            <person name="Clifton W.S."/>
            <person name="Fulton R."/>
            <person name="Cordes M."/>
            <person name="Wollam A."/>
            <person name="Shah N."/>
            <person name="Pepin K."/>
            <person name="Bhonagiri V."/>
            <person name="Nash W."/>
            <person name="Johnson M."/>
            <person name="Thiruvilangam P."/>
            <person name="Wilson R."/>
        </authorList>
    </citation>
    <scope>NUCLEOTIDE SEQUENCE [LARGE SCALE GENOMIC DNA]</scope>
    <source>
        <strain>ATCC BAA-1250 / SPB7</strain>
    </source>
</reference>
<evidence type="ECO:0000255" key="1">
    <source>
        <dbReference type="HAMAP-Rule" id="MF_00676"/>
    </source>
</evidence>
<name>YCGN_SALPB</name>
<sequence length="153" mass="18025">MADTLMSDTPFWQRKTLDEMTDAEWESLCDGCGQCCLHKLMDEDTDEIYFTNVACRQLKIKTCQCRHYERRFEFEPDCIKLTRENLPDFEWLPMTCAYRLLAEGKPLPTWHPLLTGSKAAMHGERISVRHIAVKESEVRDWQDHILNKPSWAE</sequence>
<accession>A9MVV6</accession>
<organism>
    <name type="scientific">Salmonella paratyphi B (strain ATCC BAA-1250 / SPB7)</name>
    <dbReference type="NCBI Taxonomy" id="1016998"/>
    <lineage>
        <taxon>Bacteria</taxon>
        <taxon>Pseudomonadati</taxon>
        <taxon>Pseudomonadota</taxon>
        <taxon>Gammaproteobacteria</taxon>
        <taxon>Enterobacterales</taxon>
        <taxon>Enterobacteriaceae</taxon>
        <taxon>Salmonella</taxon>
    </lineage>
</organism>